<gene>
    <name type="primary">NPF5.12</name>
    <name type="ordered locus">At1g72140</name>
    <name type="ORF">T9N14.16</name>
</gene>
<proteinExistence type="evidence at transcript level"/>
<accession>Q9C7U1</accession>
<accession>Q0WL93</accession>
<accession>Q681S0</accession>
<protein>
    <recommendedName>
        <fullName>Protein NRT1/ PTR FAMILY 5.12</fullName>
        <shortName>AtNPF5.12</shortName>
    </recommendedName>
</protein>
<name>PTR25_ARATH</name>
<reference key="1">
    <citation type="journal article" date="2000" name="Nature">
        <title>Sequence and analysis of chromosome 1 of the plant Arabidopsis thaliana.</title>
        <authorList>
            <person name="Theologis A."/>
            <person name="Ecker J.R."/>
            <person name="Palm C.J."/>
            <person name="Federspiel N.A."/>
            <person name="Kaul S."/>
            <person name="White O."/>
            <person name="Alonso J."/>
            <person name="Altafi H."/>
            <person name="Araujo R."/>
            <person name="Bowman C.L."/>
            <person name="Brooks S.Y."/>
            <person name="Buehler E."/>
            <person name="Chan A."/>
            <person name="Chao Q."/>
            <person name="Chen H."/>
            <person name="Cheuk R.F."/>
            <person name="Chin C.W."/>
            <person name="Chung M.K."/>
            <person name="Conn L."/>
            <person name="Conway A.B."/>
            <person name="Conway A.R."/>
            <person name="Creasy T.H."/>
            <person name="Dewar K."/>
            <person name="Dunn P."/>
            <person name="Etgu P."/>
            <person name="Feldblyum T.V."/>
            <person name="Feng J.-D."/>
            <person name="Fong B."/>
            <person name="Fujii C.Y."/>
            <person name="Gill J.E."/>
            <person name="Goldsmith A.D."/>
            <person name="Haas B."/>
            <person name="Hansen N.F."/>
            <person name="Hughes B."/>
            <person name="Huizar L."/>
            <person name="Hunter J.L."/>
            <person name="Jenkins J."/>
            <person name="Johnson-Hopson C."/>
            <person name="Khan S."/>
            <person name="Khaykin E."/>
            <person name="Kim C.J."/>
            <person name="Koo H.L."/>
            <person name="Kremenetskaia I."/>
            <person name="Kurtz D.B."/>
            <person name="Kwan A."/>
            <person name="Lam B."/>
            <person name="Langin-Hooper S."/>
            <person name="Lee A."/>
            <person name="Lee J.M."/>
            <person name="Lenz C.A."/>
            <person name="Li J.H."/>
            <person name="Li Y.-P."/>
            <person name="Lin X."/>
            <person name="Liu S.X."/>
            <person name="Liu Z.A."/>
            <person name="Luros J.S."/>
            <person name="Maiti R."/>
            <person name="Marziali A."/>
            <person name="Militscher J."/>
            <person name="Miranda M."/>
            <person name="Nguyen M."/>
            <person name="Nierman W.C."/>
            <person name="Osborne B.I."/>
            <person name="Pai G."/>
            <person name="Peterson J."/>
            <person name="Pham P.K."/>
            <person name="Rizzo M."/>
            <person name="Rooney T."/>
            <person name="Rowley D."/>
            <person name="Sakano H."/>
            <person name="Salzberg S.L."/>
            <person name="Schwartz J.R."/>
            <person name="Shinn P."/>
            <person name="Southwick A.M."/>
            <person name="Sun H."/>
            <person name="Tallon L.J."/>
            <person name="Tambunga G."/>
            <person name="Toriumi M.J."/>
            <person name="Town C.D."/>
            <person name="Utterback T."/>
            <person name="Van Aken S."/>
            <person name="Vaysberg M."/>
            <person name="Vysotskaia V.S."/>
            <person name="Walker M."/>
            <person name="Wu D."/>
            <person name="Yu G."/>
            <person name="Fraser C.M."/>
            <person name="Venter J.C."/>
            <person name="Davis R.W."/>
        </authorList>
    </citation>
    <scope>NUCLEOTIDE SEQUENCE [LARGE SCALE GENOMIC DNA]</scope>
    <source>
        <strain>cv. Columbia</strain>
    </source>
</reference>
<reference key="2">
    <citation type="journal article" date="2017" name="Plant J.">
        <title>Araport11: a complete reannotation of the Arabidopsis thaliana reference genome.</title>
        <authorList>
            <person name="Cheng C.Y."/>
            <person name="Krishnakumar V."/>
            <person name="Chan A.P."/>
            <person name="Thibaud-Nissen F."/>
            <person name="Schobel S."/>
            <person name="Town C.D."/>
        </authorList>
    </citation>
    <scope>GENOME REANNOTATION</scope>
    <source>
        <strain>cv. Columbia</strain>
    </source>
</reference>
<reference key="3">
    <citation type="submission" date="2004-08" db="EMBL/GenBank/DDBJ databases">
        <title>Arabidopsis ORF clones.</title>
        <authorList>
            <person name="Cheuk R."/>
            <person name="Chen H."/>
            <person name="Kim C.J."/>
            <person name="Shinn P."/>
            <person name="Ecker J.R."/>
        </authorList>
    </citation>
    <scope>NUCLEOTIDE SEQUENCE [LARGE SCALE MRNA]</scope>
    <source>
        <strain>cv. Columbia</strain>
    </source>
</reference>
<reference key="4">
    <citation type="submission" date="2004-09" db="EMBL/GenBank/DDBJ databases">
        <title>Large-scale analysis of RIKEN Arabidopsis full-length (RAFL) cDNAs.</title>
        <authorList>
            <person name="Totoki Y."/>
            <person name="Seki M."/>
            <person name="Ishida J."/>
            <person name="Nakajima M."/>
            <person name="Enju A."/>
            <person name="Kamiya A."/>
            <person name="Narusaka M."/>
            <person name="Shin-i T."/>
            <person name="Nakagawa M."/>
            <person name="Sakamoto N."/>
            <person name="Oishi K."/>
            <person name="Kohara Y."/>
            <person name="Kobayashi M."/>
            <person name="Toyoda A."/>
            <person name="Sakaki Y."/>
            <person name="Sakurai T."/>
            <person name="Iida K."/>
            <person name="Akiyama K."/>
            <person name="Satou M."/>
            <person name="Toyoda T."/>
            <person name="Konagaya A."/>
            <person name="Carninci P."/>
            <person name="Kawai J."/>
            <person name="Hayashizaki Y."/>
            <person name="Shinozaki K."/>
        </authorList>
    </citation>
    <scope>NUCLEOTIDE SEQUENCE [LARGE SCALE MRNA]</scope>
    <source>
        <strain>cv. Columbia</strain>
    </source>
</reference>
<reference key="5">
    <citation type="journal article" date="2005" name="Mol. Plant Microbe Interact.">
        <title>Nematode-induced changes of transporter gene expression in Arabidopsis roots.</title>
        <authorList>
            <person name="Hammes U.Z."/>
            <person name="Schachtman D.P."/>
            <person name="Berg R.H."/>
            <person name="Nielsen E."/>
            <person name="Koch W."/>
            <person name="McIntyre L.M."/>
            <person name="Taylor C.G."/>
        </authorList>
    </citation>
    <scope>INDUCTION BY NEMATODES</scope>
</reference>
<reference key="6">
    <citation type="journal article" date="2007" name="FEBS Lett.">
        <title>Nitrate transporters and peptide transporters.</title>
        <authorList>
            <person name="Tsay Y.F."/>
            <person name="Chiu C.C."/>
            <person name="Tsai C.B."/>
            <person name="Ho C.H."/>
            <person name="Hsu P.K."/>
        </authorList>
    </citation>
    <scope>TISSUE SPECIFICITY</scope>
    <scope>GENE FAMILY</scope>
</reference>
<reference key="7">
    <citation type="journal article" date="2010" name="Plant Cell">
        <title>The Arabidopsis nitrate transporter NRT1.8 functions in nitrate removal from the xylem sap and mediates cadmium tolerance.</title>
        <authorList>
            <person name="Li J.Y."/>
            <person name="Fu Y.L."/>
            <person name="Pike S.M."/>
            <person name="Bao J."/>
            <person name="Tian W."/>
            <person name="Zhang Y."/>
            <person name="Chen C.Z."/>
            <person name="Zhang Y."/>
            <person name="Li H.M."/>
            <person name="Huang J."/>
            <person name="Li L.G."/>
            <person name="Schroeder J.I."/>
            <person name="Gassmann W."/>
            <person name="Gong J.M."/>
        </authorList>
    </citation>
    <scope>GENE FAMILY</scope>
</reference>
<reference key="8">
    <citation type="journal article" date="2014" name="Trends Plant Sci.">
        <title>A unified nomenclature of NITRATE TRANSPORTER 1/PEPTIDE TRANSPORTER family members in plants.</title>
        <authorList>
            <person name="Leran S."/>
            <person name="Varala K."/>
            <person name="Boyer J.C."/>
            <person name="Chiurazzi M."/>
            <person name="Crawford N."/>
            <person name="Daniel-Vedele F."/>
            <person name="David L."/>
            <person name="Dickstein R."/>
            <person name="Fernandez E."/>
            <person name="Forde B."/>
            <person name="Gassmann W."/>
            <person name="Geiger D."/>
            <person name="Gojon A."/>
            <person name="Gong J.M."/>
            <person name="Halkier B.A."/>
            <person name="Harris J.M."/>
            <person name="Hedrich R."/>
            <person name="Limami A.M."/>
            <person name="Rentsch D."/>
            <person name="Seo M."/>
            <person name="Tsay Y.F."/>
            <person name="Zhang M."/>
            <person name="Coruzzi G."/>
            <person name="Lacombe B."/>
        </authorList>
    </citation>
    <scope>GENE FAMILY</scope>
    <scope>NOMENCLATURE</scope>
</reference>
<keyword id="KW-0472">Membrane</keyword>
<keyword id="KW-0597">Phosphoprotein</keyword>
<keyword id="KW-1185">Reference proteome</keyword>
<keyword id="KW-0812">Transmembrane</keyword>
<keyword id="KW-1133">Transmembrane helix</keyword>
<keyword id="KW-0813">Transport</keyword>
<dbReference type="EMBL" id="AC067754">
    <property type="protein sequence ID" value="AAG51791.1"/>
    <property type="molecule type" value="Genomic_DNA"/>
</dbReference>
<dbReference type="EMBL" id="CP002684">
    <property type="protein sequence ID" value="AEE35280.1"/>
    <property type="molecule type" value="Genomic_DNA"/>
</dbReference>
<dbReference type="EMBL" id="BT015165">
    <property type="protein sequence ID" value="AAT85761.1"/>
    <property type="molecule type" value="mRNA"/>
</dbReference>
<dbReference type="EMBL" id="AK175547">
    <property type="protein sequence ID" value="BAD43310.1"/>
    <property type="molecule type" value="mRNA"/>
</dbReference>
<dbReference type="EMBL" id="AK230313">
    <property type="protein sequence ID" value="BAF02114.1"/>
    <property type="status" value="ALT_SEQ"/>
    <property type="molecule type" value="mRNA"/>
</dbReference>
<dbReference type="PIR" id="G96744">
    <property type="entry name" value="G96744"/>
</dbReference>
<dbReference type="RefSeq" id="NP_177359.1">
    <property type="nucleotide sequence ID" value="NM_105872.5"/>
</dbReference>
<dbReference type="SMR" id="Q9C7U1"/>
<dbReference type="FunCoup" id="Q9C7U1">
    <property type="interactions" value="1602"/>
</dbReference>
<dbReference type="STRING" id="3702.Q9C7U1"/>
<dbReference type="PaxDb" id="3702-AT1G72140.1"/>
<dbReference type="ProteomicsDB" id="224841"/>
<dbReference type="EnsemblPlants" id="AT1G72140.1">
    <property type="protein sequence ID" value="AT1G72140.1"/>
    <property type="gene ID" value="AT1G72140"/>
</dbReference>
<dbReference type="GeneID" id="843545"/>
<dbReference type="Gramene" id="AT1G72140.1">
    <property type="protein sequence ID" value="AT1G72140.1"/>
    <property type="gene ID" value="AT1G72140"/>
</dbReference>
<dbReference type="KEGG" id="ath:AT1G72140"/>
<dbReference type="Araport" id="AT1G72140"/>
<dbReference type="TAIR" id="AT1G72140">
    <property type="gene designation" value="NPF5.12"/>
</dbReference>
<dbReference type="eggNOG" id="KOG1237">
    <property type="taxonomic scope" value="Eukaryota"/>
</dbReference>
<dbReference type="HOGENOM" id="CLU_009313_4_1_1"/>
<dbReference type="InParanoid" id="Q9C7U1"/>
<dbReference type="OMA" id="CTHAFGA"/>
<dbReference type="PhylomeDB" id="Q9C7U1"/>
<dbReference type="PRO" id="PR:Q9C7U1"/>
<dbReference type="Proteomes" id="UP000006548">
    <property type="component" value="Chromosome 1"/>
</dbReference>
<dbReference type="ExpressionAtlas" id="Q9C7U1">
    <property type="expression patterns" value="baseline and differential"/>
</dbReference>
<dbReference type="GO" id="GO:0000325">
    <property type="term" value="C:plant-type vacuole"/>
    <property type="evidence" value="ECO:0007005"/>
    <property type="project" value="TAIR"/>
</dbReference>
<dbReference type="GO" id="GO:0009705">
    <property type="term" value="C:plant-type vacuole membrane"/>
    <property type="evidence" value="ECO:0000314"/>
    <property type="project" value="TAIR"/>
</dbReference>
<dbReference type="GO" id="GO:0071916">
    <property type="term" value="F:dipeptide transmembrane transporter activity"/>
    <property type="evidence" value="ECO:0007669"/>
    <property type="project" value="InterPro"/>
</dbReference>
<dbReference type="GO" id="GO:0080054">
    <property type="term" value="F:low-affinity nitrate transmembrane transporter activity"/>
    <property type="evidence" value="ECO:0000314"/>
    <property type="project" value="TAIR"/>
</dbReference>
<dbReference type="GO" id="GO:0042937">
    <property type="term" value="F:tripeptide transmembrane transporter activity"/>
    <property type="evidence" value="ECO:0007669"/>
    <property type="project" value="InterPro"/>
</dbReference>
<dbReference type="GO" id="GO:0015706">
    <property type="term" value="P:nitrate transmembrane transport"/>
    <property type="evidence" value="ECO:0000314"/>
    <property type="project" value="TAIR"/>
</dbReference>
<dbReference type="GO" id="GO:0009624">
    <property type="term" value="P:response to nematode"/>
    <property type="evidence" value="ECO:0007007"/>
    <property type="project" value="TAIR"/>
</dbReference>
<dbReference type="CDD" id="cd17417">
    <property type="entry name" value="MFS_NPF5"/>
    <property type="match status" value="1"/>
</dbReference>
<dbReference type="FunFam" id="1.20.1250.20:FF:000147">
    <property type="entry name" value="Protein NRT1/ PTR family 5.10"/>
    <property type="match status" value="1"/>
</dbReference>
<dbReference type="Gene3D" id="1.20.1250.20">
    <property type="entry name" value="MFS general substrate transporter like domains"/>
    <property type="match status" value="1"/>
</dbReference>
<dbReference type="InterPro" id="IPR036259">
    <property type="entry name" value="MFS_trans_sf"/>
</dbReference>
<dbReference type="InterPro" id="IPR044739">
    <property type="entry name" value="NRT1/PTR"/>
</dbReference>
<dbReference type="InterPro" id="IPR000109">
    <property type="entry name" value="POT_fam"/>
</dbReference>
<dbReference type="PANTHER" id="PTHR11654">
    <property type="entry name" value="OLIGOPEPTIDE TRANSPORTER-RELATED"/>
    <property type="match status" value="1"/>
</dbReference>
<dbReference type="Pfam" id="PF00854">
    <property type="entry name" value="PTR2"/>
    <property type="match status" value="1"/>
</dbReference>
<dbReference type="SUPFAM" id="SSF103473">
    <property type="entry name" value="MFS general substrate transporter"/>
    <property type="match status" value="1"/>
</dbReference>
<sequence length="555" mass="61386">MSTSIGDNETGAIVSNENVEFSVDFRGNPSIRSSSGAWKSSGFTMCAEVAEKFAYFGIASNLITYFTEALGESTAVAASNVNLWLGTAAFLPLIWGSIADSFLGRFRTILLTSSFYIMGLGLLTFSATIPSLCNDQETRESCVSQVKVIIFFCALYLIALGEGGFKVCLRAFGADQFDEQDPNESKAKSSYFNWLYFAISIGILTTRLVTNYVQENLSWALGYAIPCLSMMLALFLFLLGIKTYRFSTGGEGRQGKKHDNPFVRIGRVFVAAARNRRQTPSDTCLLLPNESTKKFRFLDRAVISCDSYEVEEAKAVLSLIPIWLCSLVFGIVFAQSPTFFTKQGSTMDRSISSTLQVPAATLQCFISLAILVFIPIYDRLFVPIARSITRKPAGITTLQRISTGIFLSIISMVIAALVEMKRLKTARDHGLVDSPKATVPMSVCWLIPQYILFGVSDVFTMVGLQEFFYGEVPPQLRSMGLALYLSIIGIGNFLSSFMVSVIEEATSQSGQVSWFSNNLNQAHLDYFYWLLACLSSLAFIFTVYFAKSYLYNSPK</sequence>
<organism>
    <name type="scientific">Arabidopsis thaliana</name>
    <name type="common">Mouse-ear cress</name>
    <dbReference type="NCBI Taxonomy" id="3702"/>
    <lineage>
        <taxon>Eukaryota</taxon>
        <taxon>Viridiplantae</taxon>
        <taxon>Streptophyta</taxon>
        <taxon>Embryophyta</taxon>
        <taxon>Tracheophyta</taxon>
        <taxon>Spermatophyta</taxon>
        <taxon>Magnoliopsida</taxon>
        <taxon>eudicotyledons</taxon>
        <taxon>Gunneridae</taxon>
        <taxon>Pentapetalae</taxon>
        <taxon>rosids</taxon>
        <taxon>malvids</taxon>
        <taxon>Brassicales</taxon>
        <taxon>Brassicaceae</taxon>
        <taxon>Camelineae</taxon>
        <taxon>Arabidopsis</taxon>
    </lineage>
</organism>
<evidence type="ECO:0000250" key="1"/>
<evidence type="ECO:0000250" key="2">
    <source>
        <dbReference type="UniProtKB" id="Q05085"/>
    </source>
</evidence>
<evidence type="ECO:0000255" key="3"/>
<evidence type="ECO:0000269" key="4">
    <source>
    </source>
</evidence>
<evidence type="ECO:0000269" key="5">
    <source>
    </source>
</evidence>
<evidence type="ECO:0000305" key="6"/>
<comment type="subcellular location">
    <subcellularLocation>
        <location evidence="1">Membrane</location>
        <topology evidence="1">Multi-pass membrane protein</topology>
    </subcellularLocation>
</comment>
<comment type="tissue specificity">
    <text evidence="5">Expressed in shoots and roots.</text>
</comment>
<comment type="induction">
    <text evidence="4">Up-regulated upon nematode infection.</text>
</comment>
<comment type="similarity">
    <text evidence="6">Belongs to the major facilitator superfamily. Proton-dependent oligopeptide transporter (POT/PTR) (TC 2.A.17) family.</text>
</comment>
<comment type="sequence caution" evidence="6">
    <conflict type="miscellaneous discrepancy">
        <sequence resource="EMBL-CDS" id="BAF02114"/>
    </conflict>
    <text>Intron retention.</text>
</comment>
<feature type="chain" id="PRO_0000399959" description="Protein NRT1/ PTR FAMILY 5.12">
    <location>
        <begin position="1"/>
        <end position="555"/>
    </location>
</feature>
<feature type="transmembrane region" description="Helical" evidence="3">
    <location>
        <begin position="53"/>
        <end position="73"/>
    </location>
</feature>
<feature type="transmembrane region" description="Helical" evidence="3">
    <location>
        <begin position="83"/>
        <end position="103"/>
    </location>
</feature>
<feature type="transmembrane region" description="Helical" evidence="3">
    <location>
        <begin position="109"/>
        <end position="129"/>
    </location>
</feature>
<feature type="transmembrane region" description="Helical" evidence="3">
    <location>
        <begin position="148"/>
        <end position="168"/>
    </location>
</feature>
<feature type="transmembrane region" description="Helical" evidence="3">
    <location>
        <begin position="190"/>
        <end position="210"/>
    </location>
</feature>
<feature type="transmembrane region" description="Helical" evidence="3">
    <location>
        <begin position="221"/>
        <end position="241"/>
    </location>
</feature>
<feature type="transmembrane region" description="Helical" evidence="3">
    <location>
        <begin position="315"/>
        <end position="335"/>
    </location>
</feature>
<feature type="transmembrane region" description="Helical" evidence="3">
    <location>
        <begin position="357"/>
        <end position="377"/>
    </location>
</feature>
<feature type="transmembrane region" description="Helical" evidence="3">
    <location>
        <begin position="401"/>
        <end position="421"/>
    </location>
</feature>
<feature type="transmembrane region" description="Helical" evidence="3">
    <location>
        <begin position="443"/>
        <end position="463"/>
    </location>
</feature>
<feature type="transmembrane region" description="Helical" evidence="3">
    <location>
        <begin position="482"/>
        <end position="502"/>
    </location>
</feature>
<feature type="transmembrane region" description="Helical" evidence="3">
    <location>
        <begin position="526"/>
        <end position="546"/>
    </location>
</feature>
<feature type="modified residue" description="Phosphothreonine" evidence="2">
    <location>
        <position position="108"/>
    </location>
</feature>
<feature type="sequence conflict" description="In Ref. 4; BAD43310." evidence="6" ref="4">
    <original>C</original>
    <variation>Y</variation>
    <location>
        <position position="142"/>
    </location>
</feature>